<protein>
    <recommendedName>
        <fullName evidence="1">Ion-translocating oxidoreductase complex subunit D</fullName>
        <ecNumber evidence="1">7.-.-.-</ecNumber>
    </recommendedName>
    <alternativeName>
        <fullName evidence="1">Rsx electron transport complex subunit D</fullName>
    </alternativeName>
</protein>
<name>RSXD_ECO45</name>
<comment type="function">
    <text evidence="1">Part of a membrane-bound complex that couples electron transfer with translocation of ions across the membrane. Required to maintain the reduced state of SoxR.</text>
</comment>
<comment type="cofactor">
    <cofactor evidence="1">
        <name>FMN</name>
        <dbReference type="ChEBI" id="CHEBI:58210"/>
    </cofactor>
</comment>
<comment type="subunit">
    <text evidence="1">The complex is composed of six subunits: RsxA, RsxB, RsxC, RsxD, RsxE and RsxG.</text>
</comment>
<comment type="subcellular location">
    <subcellularLocation>
        <location evidence="1">Cell inner membrane</location>
        <topology evidence="1">Multi-pass membrane protein</topology>
    </subcellularLocation>
</comment>
<comment type="similarity">
    <text evidence="1">Belongs to the NqrB/RnfD family.</text>
</comment>
<dbReference type="EC" id="7.-.-.-" evidence="1"/>
<dbReference type="EMBL" id="CU928161">
    <property type="protein sequence ID" value="CAR02991.1"/>
    <property type="molecule type" value="Genomic_DNA"/>
</dbReference>
<dbReference type="RefSeq" id="WP_000231939.1">
    <property type="nucleotide sequence ID" value="NC_011742.1"/>
</dbReference>
<dbReference type="SMR" id="B7M9Y4"/>
<dbReference type="KEGG" id="ecz:ECS88_1678"/>
<dbReference type="HOGENOM" id="CLU_042020_0_0_6"/>
<dbReference type="Proteomes" id="UP000000747">
    <property type="component" value="Chromosome"/>
</dbReference>
<dbReference type="GO" id="GO:0005886">
    <property type="term" value="C:plasma membrane"/>
    <property type="evidence" value="ECO:0007669"/>
    <property type="project" value="UniProtKB-SubCell"/>
</dbReference>
<dbReference type="GO" id="GO:0022900">
    <property type="term" value="P:electron transport chain"/>
    <property type="evidence" value="ECO:0007669"/>
    <property type="project" value="UniProtKB-UniRule"/>
</dbReference>
<dbReference type="GO" id="GO:0055085">
    <property type="term" value="P:transmembrane transport"/>
    <property type="evidence" value="ECO:0007669"/>
    <property type="project" value="InterPro"/>
</dbReference>
<dbReference type="HAMAP" id="MF_00462">
    <property type="entry name" value="RsxD_RnfD"/>
    <property type="match status" value="1"/>
</dbReference>
<dbReference type="InterPro" id="IPR004338">
    <property type="entry name" value="NqrB/RnfD"/>
</dbReference>
<dbReference type="InterPro" id="IPR011303">
    <property type="entry name" value="RnfD_bac"/>
</dbReference>
<dbReference type="NCBIfam" id="NF002011">
    <property type="entry name" value="PRK00816.1"/>
    <property type="match status" value="1"/>
</dbReference>
<dbReference type="NCBIfam" id="TIGR01946">
    <property type="entry name" value="rnfD"/>
    <property type="match status" value="1"/>
</dbReference>
<dbReference type="PANTHER" id="PTHR30578">
    <property type="entry name" value="ELECTRON TRANSPORT COMPLEX PROTEIN RNFD"/>
    <property type="match status" value="1"/>
</dbReference>
<dbReference type="PANTHER" id="PTHR30578:SF0">
    <property type="entry name" value="ION-TRANSLOCATING OXIDOREDUCTASE COMPLEX SUBUNIT D"/>
    <property type="match status" value="1"/>
</dbReference>
<dbReference type="Pfam" id="PF03116">
    <property type="entry name" value="NQR2_RnfD_RnfE"/>
    <property type="match status" value="1"/>
</dbReference>
<organism>
    <name type="scientific">Escherichia coli O45:K1 (strain S88 / ExPEC)</name>
    <dbReference type="NCBI Taxonomy" id="585035"/>
    <lineage>
        <taxon>Bacteria</taxon>
        <taxon>Pseudomonadati</taxon>
        <taxon>Pseudomonadota</taxon>
        <taxon>Gammaproteobacteria</taxon>
        <taxon>Enterobacterales</taxon>
        <taxon>Enterobacteriaceae</taxon>
        <taxon>Escherichia</taxon>
    </lineage>
</organism>
<gene>
    <name evidence="1" type="primary">rsxD</name>
    <name type="ordered locus">ECS88_1678</name>
</gene>
<evidence type="ECO:0000255" key="1">
    <source>
        <dbReference type="HAMAP-Rule" id="MF_00462"/>
    </source>
</evidence>
<feature type="chain" id="PRO_1000191676" description="Ion-translocating oxidoreductase complex subunit D">
    <location>
        <begin position="1"/>
        <end position="352"/>
    </location>
</feature>
<feature type="transmembrane region" description="Helical" evidence="1">
    <location>
        <begin position="20"/>
        <end position="40"/>
    </location>
</feature>
<feature type="transmembrane region" description="Helical" evidence="1">
    <location>
        <begin position="42"/>
        <end position="62"/>
    </location>
</feature>
<feature type="transmembrane region" description="Helical" evidence="1">
    <location>
        <begin position="89"/>
        <end position="109"/>
    </location>
</feature>
<feature type="transmembrane region" description="Helical" evidence="1">
    <location>
        <begin position="123"/>
        <end position="143"/>
    </location>
</feature>
<feature type="transmembrane region" description="Helical" evidence="1">
    <location>
        <begin position="214"/>
        <end position="234"/>
    </location>
</feature>
<feature type="transmembrane region" description="Helical" evidence="1">
    <location>
        <begin position="242"/>
        <end position="262"/>
    </location>
</feature>
<feature type="transmembrane region" description="Helical" evidence="1">
    <location>
        <begin position="267"/>
        <end position="287"/>
    </location>
</feature>
<feature type="transmembrane region" description="Helical" evidence="1">
    <location>
        <begin position="301"/>
        <end position="321"/>
    </location>
</feature>
<feature type="transmembrane region" description="Helical" evidence="1">
    <location>
        <begin position="322"/>
        <end position="342"/>
    </location>
</feature>
<feature type="modified residue" description="FMN phosphoryl threonine" evidence="1">
    <location>
        <position position="187"/>
    </location>
</feature>
<sequence>MVFRIASSPYTHNQRQTSRIMLLVLLAAVPGIAAQLWFFGWGTLVQILLASVSALLAEALVLKLRKQSVAATLKDNSALLTGLLLAVSIPPLAPWWMVVLGTVFAVIIAKQLYGGLGQNPFNPAMIGYVVLLISFPVQMTSWLPPHEIAVNIPGFIDAIQVIFSGHTTSGGDMNTLRLGIDGISQATPLDTFKTSVRAGHSVEEIMQYPIYSGILAGAGWQWVNLAWLAGGVWLLWQKAIRWHVPLSFLVTLALCATLGWLFSPDTLAAPQIHLLSGATMLGAFFILTDPVTASTTNRGRLIFGALAGLLVWMIRSFGGYPDGVAFAVLLANITVPLIDYYTRPRVYGHRKG</sequence>
<proteinExistence type="inferred from homology"/>
<reference key="1">
    <citation type="journal article" date="2009" name="PLoS Genet.">
        <title>Organised genome dynamics in the Escherichia coli species results in highly diverse adaptive paths.</title>
        <authorList>
            <person name="Touchon M."/>
            <person name="Hoede C."/>
            <person name="Tenaillon O."/>
            <person name="Barbe V."/>
            <person name="Baeriswyl S."/>
            <person name="Bidet P."/>
            <person name="Bingen E."/>
            <person name="Bonacorsi S."/>
            <person name="Bouchier C."/>
            <person name="Bouvet O."/>
            <person name="Calteau A."/>
            <person name="Chiapello H."/>
            <person name="Clermont O."/>
            <person name="Cruveiller S."/>
            <person name="Danchin A."/>
            <person name="Diard M."/>
            <person name="Dossat C."/>
            <person name="Karoui M.E."/>
            <person name="Frapy E."/>
            <person name="Garry L."/>
            <person name="Ghigo J.M."/>
            <person name="Gilles A.M."/>
            <person name="Johnson J."/>
            <person name="Le Bouguenec C."/>
            <person name="Lescat M."/>
            <person name="Mangenot S."/>
            <person name="Martinez-Jehanne V."/>
            <person name="Matic I."/>
            <person name="Nassif X."/>
            <person name="Oztas S."/>
            <person name="Petit M.A."/>
            <person name="Pichon C."/>
            <person name="Rouy Z."/>
            <person name="Ruf C.S."/>
            <person name="Schneider D."/>
            <person name="Tourret J."/>
            <person name="Vacherie B."/>
            <person name="Vallenet D."/>
            <person name="Medigue C."/>
            <person name="Rocha E.P.C."/>
            <person name="Denamur E."/>
        </authorList>
    </citation>
    <scope>NUCLEOTIDE SEQUENCE [LARGE SCALE GENOMIC DNA]</scope>
    <source>
        <strain>S88 / ExPEC</strain>
    </source>
</reference>
<accession>B7M9Y4</accession>
<keyword id="KW-0997">Cell inner membrane</keyword>
<keyword id="KW-1003">Cell membrane</keyword>
<keyword id="KW-0249">Electron transport</keyword>
<keyword id="KW-0285">Flavoprotein</keyword>
<keyword id="KW-0288">FMN</keyword>
<keyword id="KW-0472">Membrane</keyword>
<keyword id="KW-0597">Phosphoprotein</keyword>
<keyword id="KW-1185">Reference proteome</keyword>
<keyword id="KW-1278">Translocase</keyword>
<keyword id="KW-0812">Transmembrane</keyword>
<keyword id="KW-1133">Transmembrane helix</keyword>
<keyword id="KW-0813">Transport</keyword>